<keyword id="KW-0687">Ribonucleoprotein</keyword>
<keyword id="KW-0689">Ribosomal protein</keyword>
<accession>A3PK94</accession>
<feature type="chain" id="PRO_1000128164" description="Small ribosomal subunit protein uS9">
    <location>
        <begin position="1"/>
        <end position="160"/>
    </location>
</feature>
<dbReference type="EMBL" id="CP000577">
    <property type="protein sequence ID" value="ABN76760.1"/>
    <property type="molecule type" value="Genomic_DNA"/>
</dbReference>
<dbReference type="RefSeq" id="WP_002720163.1">
    <property type="nucleotide sequence ID" value="NC_009049.1"/>
</dbReference>
<dbReference type="SMR" id="A3PK94"/>
<dbReference type="GeneID" id="67446747"/>
<dbReference type="KEGG" id="rsh:Rsph17029_1650"/>
<dbReference type="HOGENOM" id="CLU_046483_2_0_5"/>
<dbReference type="GO" id="GO:0022627">
    <property type="term" value="C:cytosolic small ribosomal subunit"/>
    <property type="evidence" value="ECO:0007669"/>
    <property type="project" value="TreeGrafter"/>
</dbReference>
<dbReference type="GO" id="GO:0003723">
    <property type="term" value="F:RNA binding"/>
    <property type="evidence" value="ECO:0007669"/>
    <property type="project" value="TreeGrafter"/>
</dbReference>
<dbReference type="GO" id="GO:0003735">
    <property type="term" value="F:structural constituent of ribosome"/>
    <property type="evidence" value="ECO:0007669"/>
    <property type="project" value="InterPro"/>
</dbReference>
<dbReference type="GO" id="GO:0006412">
    <property type="term" value="P:translation"/>
    <property type="evidence" value="ECO:0007669"/>
    <property type="project" value="UniProtKB-UniRule"/>
</dbReference>
<dbReference type="FunFam" id="3.30.230.10:FF:000001">
    <property type="entry name" value="30S ribosomal protein S9"/>
    <property type="match status" value="1"/>
</dbReference>
<dbReference type="Gene3D" id="3.30.230.10">
    <property type="match status" value="1"/>
</dbReference>
<dbReference type="HAMAP" id="MF_00532_B">
    <property type="entry name" value="Ribosomal_uS9_B"/>
    <property type="match status" value="1"/>
</dbReference>
<dbReference type="InterPro" id="IPR020568">
    <property type="entry name" value="Ribosomal_Su5_D2-typ_SF"/>
</dbReference>
<dbReference type="InterPro" id="IPR000754">
    <property type="entry name" value="Ribosomal_uS9"/>
</dbReference>
<dbReference type="InterPro" id="IPR023035">
    <property type="entry name" value="Ribosomal_uS9_bac/plastid"/>
</dbReference>
<dbReference type="InterPro" id="IPR020574">
    <property type="entry name" value="Ribosomal_uS9_CS"/>
</dbReference>
<dbReference type="InterPro" id="IPR014721">
    <property type="entry name" value="Ribsml_uS5_D2-typ_fold_subgr"/>
</dbReference>
<dbReference type="NCBIfam" id="NF001099">
    <property type="entry name" value="PRK00132.1"/>
    <property type="match status" value="1"/>
</dbReference>
<dbReference type="PANTHER" id="PTHR21569">
    <property type="entry name" value="RIBOSOMAL PROTEIN S9"/>
    <property type="match status" value="1"/>
</dbReference>
<dbReference type="PANTHER" id="PTHR21569:SF1">
    <property type="entry name" value="SMALL RIBOSOMAL SUBUNIT PROTEIN US9M"/>
    <property type="match status" value="1"/>
</dbReference>
<dbReference type="Pfam" id="PF00380">
    <property type="entry name" value="Ribosomal_S9"/>
    <property type="match status" value="1"/>
</dbReference>
<dbReference type="SUPFAM" id="SSF54211">
    <property type="entry name" value="Ribosomal protein S5 domain 2-like"/>
    <property type="match status" value="1"/>
</dbReference>
<dbReference type="PROSITE" id="PS00360">
    <property type="entry name" value="RIBOSOMAL_S9"/>
    <property type="match status" value="1"/>
</dbReference>
<comment type="similarity">
    <text evidence="1">Belongs to the universal ribosomal protein uS9 family.</text>
</comment>
<reference key="1">
    <citation type="submission" date="2007-02" db="EMBL/GenBank/DDBJ databases">
        <title>Complete sequence of chromosome 1 of Rhodobacter sphaeroides ATCC 17029.</title>
        <authorList>
            <person name="Copeland A."/>
            <person name="Lucas S."/>
            <person name="Lapidus A."/>
            <person name="Barry K."/>
            <person name="Detter J.C."/>
            <person name="Glavina del Rio T."/>
            <person name="Hammon N."/>
            <person name="Israni S."/>
            <person name="Dalin E."/>
            <person name="Tice H."/>
            <person name="Pitluck S."/>
            <person name="Kiss H."/>
            <person name="Brettin T."/>
            <person name="Bruce D."/>
            <person name="Han C."/>
            <person name="Tapia R."/>
            <person name="Gilna P."/>
            <person name="Schmutz J."/>
            <person name="Larimer F."/>
            <person name="Land M."/>
            <person name="Hauser L."/>
            <person name="Kyrpides N."/>
            <person name="Mikhailova N."/>
            <person name="Richardson P."/>
            <person name="Mackenzie C."/>
            <person name="Choudhary M."/>
            <person name="Donohue T.J."/>
            <person name="Kaplan S."/>
        </authorList>
    </citation>
    <scope>NUCLEOTIDE SEQUENCE [LARGE SCALE GENOMIC DNA]</scope>
    <source>
        <strain>ATCC 17029 / ATH 2.4.9</strain>
    </source>
</reference>
<name>RS9_CERS1</name>
<protein>
    <recommendedName>
        <fullName evidence="1">Small ribosomal subunit protein uS9</fullName>
    </recommendedName>
    <alternativeName>
        <fullName evidence="2">30S ribosomal protein S9</fullName>
    </alternativeName>
</protein>
<proteinExistence type="inferred from homology"/>
<evidence type="ECO:0000255" key="1">
    <source>
        <dbReference type="HAMAP-Rule" id="MF_00532"/>
    </source>
</evidence>
<evidence type="ECO:0000305" key="2"/>
<sequence length="160" mass="17347">MSDIKSLDDLKSVVGEAPVAEVAIAREPVRDSLGRSYATGKRKDAVARVWIKPGSGKVTVNGKPMDEYFARPVLQMILRQPFKVANVEGQFDVMATVAGGGLSGQAGAVKHGISKALQLYEPALRAALKAAGFLTRDSRVVERKKYGKAKARRSFQFSKR</sequence>
<organism>
    <name type="scientific">Cereibacter sphaeroides (strain ATCC 17029 / ATH 2.4.9)</name>
    <name type="common">Rhodobacter sphaeroides</name>
    <dbReference type="NCBI Taxonomy" id="349101"/>
    <lineage>
        <taxon>Bacteria</taxon>
        <taxon>Pseudomonadati</taxon>
        <taxon>Pseudomonadota</taxon>
        <taxon>Alphaproteobacteria</taxon>
        <taxon>Rhodobacterales</taxon>
        <taxon>Paracoccaceae</taxon>
        <taxon>Cereibacter</taxon>
    </lineage>
</organism>
<gene>
    <name evidence="1" type="primary">rpsI</name>
    <name type="ordered locus">Rsph17029_1650</name>
</gene>